<accession>Q0ATQ2</accession>
<gene>
    <name evidence="1" type="primary">tsaD</name>
    <name type="synonym">gcp</name>
    <name type="ordered locus">Mmar10_0039</name>
</gene>
<name>TSAD_MARMM</name>
<organism>
    <name type="scientific">Maricaulis maris (strain MCS10)</name>
    <name type="common">Caulobacter maris</name>
    <dbReference type="NCBI Taxonomy" id="394221"/>
    <lineage>
        <taxon>Bacteria</taxon>
        <taxon>Pseudomonadati</taxon>
        <taxon>Pseudomonadota</taxon>
        <taxon>Alphaproteobacteria</taxon>
        <taxon>Maricaulales</taxon>
        <taxon>Maricaulaceae</taxon>
        <taxon>Maricaulis</taxon>
    </lineage>
</organism>
<evidence type="ECO:0000255" key="1">
    <source>
        <dbReference type="HAMAP-Rule" id="MF_01445"/>
    </source>
</evidence>
<evidence type="ECO:0000256" key="2">
    <source>
        <dbReference type="SAM" id="MobiDB-lite"/>
    </source>
</evidence>
<reference key="1">
    <citation type="submission" date="2006-08" db="EMBL/GenBank/DDBJ databases">
        <title>Complete sequence of Maricaulis maris MCS10.</title>
        <authorList>
            <consortium name="US DOE Joint Genome Institute"/>
            <person name="Copeland A."/>
            <person name="Lucas S."/>
            <person name="Lapidus A."/>
            <person name="Barry K."/>
            <person name="Detter J.C."/>
            <person name="Glavina del Rio T."/>
            <person name="Hammon N."/>
            <person name="Israni S."/>
            <person name="Dalin E."/>
            <person name="Tice H."/>
            <person name="Pitluck S."/>
            <person name="Saunders E."/>
            <person name="Brettin T."/>
            <person name="Bruce D."/>
            <person name="Han C."/>
            <person name="Tapia R."/>
            <person name="Gilna P."/>
            <person name="Schmutz J."/>
            <person name="Larimer F."/>
            <person name="Land M."/>
            <person name="Hauser L."/>
            <person name="Kyrpides N."/>
            <person name="Mikhailova N."/>
            <person name="Viollier P."/>
            <person name="Stephens C."/>
            <person name="Richardson P."/>
        </authorList>
    </citation>
    <scope>NUCLEOTIDE SEQUENCE [LARGE SCALE GENOMIC DNA]</scope>
    <source>
        <strain>MCS10</strain>
    </source>
</reference>
<feature type="chain" id="PRO_0000303419" description="tRNA N6-adenosine threonylcarbamoyltransferase">
    <location>
        <begin position="1"/>
        <end position="377"/>
    </location>
</feature>
<feature type="region of interest" description="Disordered" evidence="2">
    <location>
        <begin position="358"/>
        <end position="377"/>
    </location>
</feature>
<feature type="binding site" evidence="1">
    <location>
        <position position="129"/>
    </location>
    <ligand>
        <name>Fe cation</name>
        <dbReference type="ChEBI" id="CHEBI:24875"/>
    </ligand>
</feature>
<feature type="binding site" evidence="1">
    <location>
        <position position="133"/>
    </location>
    <ligand>
        <name>Fe cation</name>
        <dbReference type="ChEBI" id="CHEBI:24875"/>
    </ligand>
</feature>
<feature type="binding site" evidence="1">
    <location>
        <begin position="151"/>
        <end position="155"/>
    </location>
    <ligand>
        <name>substrate</name>
    </ligand>
</feature>
<feature type="binding site" evidence="1">
    <location>
        <position position="184"/>
    </location>
    <ligand>
        <name>substrate</name>
    </ligand>
</feature>
<feature type="binding site" evidence="1">
    <location>
        <position position="197"/>
    </location>
    <ligand>
        <name>substrate</name>
    </ligand>
</feature>
<feature type="binding site" evidence="1">
    <location>
        <position position="298"/>
    </location>
    <ligand>
        <name>substrate</name>
    </ligand>
</feature>
<feature type="binding site" evidence="1">
    <location>
        <position position="326"/>
    </location>
    <ligand>
        <name>Fe cation</name>
        <dbReference type="ChEBI" id="CHEBI:24875"/>
    </ligand>
</feature>
<comment type="function">
    <text evidence="1">Required for the formation of a threonylcarbamoyl group on adenosine at position 37 (t(6)A37) in tRNAs that read codons beginning with adenine. Is involved in the transfer of the threonylcarbamoyl moiety of threonylcarbamoyl-AMP (TC-AMP) to the N6 group of A37, together with TsaE and TsaB. TsaD likely plays a direct catalytic role in this reaction.</text>
</comment>
<comment type="catalytic activity">
    <reaction evidence="1">
        <text>L-threonylcarbamoyladenylate + adenosine(37) in tRNA = N(6)-L-threonylcarbamoyladenosine(37) in tRNA + AMP + H(+)</text>
        <dbReference type="Rhea" id="RHEA:37059"/>
        <dbReference type="Rhea" id="RHEA-COMP:10162"/>
        <dbReference type="Rhea" id="RHEA-COMP:10163"/>
        <dbReference type="ChEBI" id="CHEBI:15378"/>
        <dbReference type="ChEBI" id="CHEBI:73682"/>
        <dbReference type="ChEBI" id="CHEBI:74411"/>
        <dbReference type="ChEBI" id="CHEBI:74418"/>
        <dbReference type="ChEBI" id="CHEBI:456215"/>
        <dbReference type="EC" id="2.3.1.234"/>
    </reaction>
</comment>
<comment type="cofactor">
    <cofactor evidence="1">
        <name>Fe(2+)</name>
        <dbReference type="ChEBI" id="CHEBI:29033"/>
    </cofactor>
    <text evidence="1">Binds 1 Fe(2+) ion per subunit.</text>
</comment>
<comment type="subcellular location">
    <subcellularLocation>
        <location evidence="1">Cytoplasm</location>
    </subcellularLocation>
</comment>
<comment type="similarity">
    <text evidence="1">Belongs to the KAE1 / TsaD family.</text>
</comment>
<sequence length="377" mass="38368">MDLAPTSPQAQARALTVLGLESSCDETAAAILRREVDGSVTVLADRVLGQNDAHAPFGGVVPEIAARAHAEAMDGLVSQALAEAGLAVADLDGIAATSGPGLIGGVMAALMTAKGLALGAGKPLIAVNHLEGHALSPRISEPLAFPYLLLLVSGGHTQLLIAEGVGVYHRLGSTMDDAAGEAFDKTAKVMGLGFPGGPALERCAQSGDATRFALPVPLKGKPGCDFSFAGLKTAARQIWDGLDAPSDQDRADLSACVQAAIARALSSRTRRALAMFVDRFPDASRPMALVVAGGVAANKAVRAALEDEAAAAGFRLVAPPMKWCTDNAAMIALVGLEKLARGQIDGLDAPARARWPLDGAAAKSDPAIGSGRKGPKA</sequence>
<protein>
    <recommendedName>
        <fullName evidence="1">tRNA N6-adenosine threonylcarbamoyltransferase</fullName>
        <ecNumber evidence="1">2.3.1.234</ecNumber>
    </recommendedName>
    <alternativeName>
        <fullName evidence="1">N6-L-threonylcarbamoyladenine synthase</fullName>
        <shortName evidence="1">t(6)A synthase</shortName>
    </alternativeName>
    <alternativeName>
        <fullName evidence="1">t(6)A37 threonylcarbamoyladenosine biosynthesis protein TsaD</fullName>
    </alternativeName>
    <alternativeName>
        <fullName evidence="1">tRNA threonylcarbamoyladenosine biosynthesis protein TsaD</fullName>
    </alternativeName>
</protein>
<dbReference type="EC" id="2.3.1.234" evidence="1"/>
<dbReference type="EMBL" id="CP000449">
    <property type="protein sequence ID" value="ABI64335.1"/>
    <property type="molecule type" value="Genomic_DNA"/>
</dbReference>
<dbReference type="RefSeq" id="WP_011641982.1">
    <property type="nucleotide sequence ID" value="NC_008347.1"/>
</dbReference>
<dbReference type="SMR" id="Q0ATQ2"/>
<dbReference type="STRING" id="394221.Mmar10_0039"/>
<dbReference type="KEGG" id="mmr:Mmar10_0039"/>
<dbReference type="eggNOG" id="COG0533">
    <property type="taxonomic scope" value="Bacteria"/>
</dbReference>
<dbReference type="HOGENOM" id="CLU_023208_0_2_5"/>
<dbReference type="Proteomes" id="UP000001964">
    <property type="component" value="Chromosome"/>
</dbReference>
<dbReference type="GO" id="GO:0005737">
    <property type="term" value="C:cytoplasm"/>
    <property type="evidence" value="ECO:0007669"/>
    <property type="project" value="UniProtKB-SubCell"/>
</dbReference>
<dbReference type="GO" id="GO:0005506">
    <property type="term" value="F:iron ion binding"/>
    <property type="evidence" value="ECO:0007669"/>
    <property type="project" value="UniProtKB-UniRule"/>
</dbReference>
<dbReference type="GO" id="GO:0061711">
    <property type="term" value="F:N(6)-L-threonylcarbamoyladenine synthase activity"/>
    <property type="evidence" value="ECO:0007669"/>
    <property type="project" value="UniProtKB-EC"/>
</dbReference>
<dbReference type="GO" id="GO:0002949">
    <property type="term" value="P:tRNA threonylcarbamoyladenosine modification"/>
    <property type="evidence" value="ECO:0007669"/>
    <property type="project" value="UniProtKB-UniRule"/>
</dbReference>
<dbReference type="CDD" id="cd24133">
    <property type="entry name" value="ASKHA_NBD_TsaD_bac"/>
    <property type="match status" value="1"/>
</dbReference>
<dbReference type="FunFam" id="3.30.420.40:FF:000012">
    <property type="entry name" value="tRNA N6-adenosine threonylcarbamoyltransferase"/>
    <property type="match status" value="1"/>
</dbReference>
<dbReference type="Gene3D" id="3.30.420.40">
    <property type="match status" value="2"/>
</dbReference>
<dbReference type="HAMAP" id="MF_01445">
    <property type="entry name" value="TsaD"/>
    <property type="match status" value="1"/>
</dbReference>
<dbReference type="InterPro" id="IPR043129">
    <property type="entry name" value="ATPase_NBD"/>
</dbReference>
<dbReference type="InterPro" id="IPR000905">
    <property type="entry name" value="Gcp-like_dom"/>
</dbReference>
<dbReference type="InterPro" id="IPR017861">
    <property type="entry name" value="KAE1/TsaD"/>
</dbReference>
<dbReference type="InterPro" id="IPR022450">
    <property type="entry name" value="TsaD"/>
</dbReference>
<dbReference type="NCBIfam" id="TIGR00329">
    <property type="entry name" value="gcp_kae1"/>
    <property type="match status" value="1"/>
</dbReference>
<dbReference type="NCBIfam" id="TIGR03723">
    <property type="entry name" value="T6A_TsaD_YgjD"/>
    <property type="match status" value="1"/>
</dbReference>
<dbReference type="PANTHER" id="PTHR11735">
    <property type="entry name" value="TRNA N6-ADENOSINE THREONYLCARBAMOYLTRANSFERASE"/>
    <property type="match status" value="1"/>
</dbReference>
<dbReference type="PANTHER" id="PTHR11735:SF6">
    <property type="entry name" value="TRNA N6-ADENOSINE THREONYLCARBAMOYLTRANSFERASE, MITOCHONDRIAL"/>
    <property type="match status" value="1"/>
</dbReference>
<dbReference type="Pfam" id="PF00814">
    <property type="entry name" value="TsaD"/>
    <property type="match status" value="1"/>
</dbReference>
<dbReference type="PRINTS" id="PR00789">
    <property type="entry name" value="OSIALOPTASE"/>
</dbReference>
<dbReference type="SUPFAM" id="SSF53067">
    <property type="entry name" value="Actin-like ATPase domain"/>
    <property type="match status" value="2"/>
</dbReference>
<keyword id="KW-0012">Acyltransferase</keyword>
<keyword id="KW-0963">Cytoplasm</keyword>
<keyword id="KW-0408">Iron</keyword>
<keyword id="KW-0479">Metal-binding</keyword>
<keyword id="KW-1185">Reference proteome</keyword>
<keyword id="KW-0808">Transferase</keyword>
<keyword id="KW-0819">tRNA processing</keyword>
<proteinExistence type="inferred from homology"/>